<organism>
    <name type="scientific">Rattus norvegicus</name>
    <name type="common">Rat</name>
    <dbReference type="NCBI Taxonomy" id="10116"/>
    <lineage>
        <taxon>Eukaryota</taxon>
        <taxon>Metazoa</taxon>
        <taxon>Chordata</taxon>
        <taxon>Craniata</taxon>
        <taxon>Vertebrata</taxon>
        <taxon>Euteleostomi</taxon>
        <taxon>Mammalia</taxon>
        <taxon>Eutheria</taxon>
        <taxon>Euarchontoglires</taxon>
        <taxon>Glires</taxon>
        <taxon>Rodentia</taxon>
        <taxon>Myomorpha</taxon>
        <taxon>Muroidea</taxon>
        <taxon>Muridae</taxon>
        <taxon>Murinae</taxon>
        <taxon>Rattus</taxon>
    </lineage>
</organism>
<accession>P43322</accession>
<accession>P43323</accession>
<accession>P43324</accession>
<accession>P43325</accession>
<accession>P43326</accession>
<accession>P43327</accession>
<accession>P43328</accession>
<protein>
    <recommendedName>
        <fullName>Pro-neuregulin-1, membrane-bound isoform</fullName>
        <shortName>Pro-NRG1</shortName>
    </recommendedName>
    <component>
        <recommendedName>
            <fullName>Neuregulin-1</fullName>
        </recommendedName>
        <alternativeName>
            <fullName>Acetylcholine receptor-inducing activity</fullName>
            <shortName>ARIA</shortName>
        </alternativeName>
        <alternativeName>
            <fullName>Glial growth factor</fullName>
        </alternativeName>
        <alternativeName>
            <fullName>Heregulin</fullName>
            <shortName>HRG</shortName>
        </alternativeName>
        <alternativeName>
            <fullName>Neu differentiation factor</fullName>
        </alternativeName>
        <alternativeName>
            <fullName>Sensory and motor neuron-derived factor</fullName>
        </alternativeName>
    </component>
</protein>
<proteinExistence type="evidence at protein level"/>
<keyword id="KW-0025">Alternative splicing</keyword>
<keyword id="KW-1003">Cell membrane</keyword>
<keyword id="KW-0903">Direct protein sequencing</keyword>
<keyword id="KW-1015">Disulfide bond</keyword>
<keyword id="KW-0245">EGF-like domain</keyword>
<keyword id="KW-0325">Glycoprotein</keyword>
<keyword id="KW-0339">Growth factor</keyword>
<keyword id="KW-0393">Immunoglobulin domain</keyword>
<keyword id="KW-0472">Membrane</keyword>
<keyword id="KW-1185">Reference proteome</keyword>
<keyword id="KW-0964">Secreted</keyword>
<keyword id="KW-0812">Transmembrane</keyword>
<keyword id="KW-1133">Transmembrane helix</keyword>
<sequence>MSERKEGRGKGKGKKKDRGSRGKPGPAEGDPSPALPPRLKEMKSQESAAGSKLVLRCETSSEYSSLRFKWFKNGNELNRKNKPENIKIQKKPGKSELRINKASLADSGEYMCKVISKLGNDSASANITIVESNEFITGMPASTETAYVSSESPIRISVSTEGANTSSSTSTSTTGTSHLIKCAEKEKTFCVNGGECFTVKDLSNPSRYLCKCPNEFTGDRCQNYVMASFYMTSRRKRQETEKPLERKLDHSLVKESKAEELYQKRVLTITGICIALLVVGIMCVVAYCKTKKQRQKLHDRLRQSLRSERSNLVNIANGPHHPNPPPENVQLVNQYVSKNVISSEHIVEREVETSFSTSHYTSTAHHSTTVTQTPSHSWSNGHTESVISESNSVIMMSSVENSRHSSPAGGPRGRLHGLGGPRDNSFLRHARETPDSYRDSPHSERYVSAMTTPARMSPVDFHTPSSPKSPPSEMSPPVSSMTVSMPSVAVSPFVEEERPLLLVTPPRLREKKYDHHPQQLNSFHHNPAHQSTSLPPSPLRIVEDEEYETTQEYESVQEPVKKVTNSRRAKRTKPNGHIANRLEMDSNTSSVSSNSESETEDERVGEDTPFLGIQNPLAASLEVAPAFRLAESRTNPAGRFSTQEELQARLSSVIANQDPIAV</sequence>
<feature type="propeptide" id="PRO_0000019465" evidence="7">
    <location>
        <begin position="1"/>
        <end position="13"/>
    </location>
</feature>
<feature type="chain" id="PRO_0000019466" description="Pro-neuregulin-1, membrane-bound isoform">
    <location>
        <begin position="14"/>
        <end position="662"/>
    </location>
</feature>
<feature type="chain" id="PRO_0000019467" description="Neuregulin-1">
    <location>
        <begin position="14"/>
        <end position="264"/>
    </location>
</feature>
<feature type="topological domain" description="Extracellular" evidence="4">
    <location>
        <begin position="14"/>
        <end position="265"/>
    </location>
</feature>
<feature type="transmembrane region" description="Helical; Note=Internal signal sequence" evidence="4">
    <location>
        <begin position="266"/>
        <end position="288"/>
    </location>
</feature>
<feature type="topological domain" description="Cytoplasmic" evidence="4">
    <location>
        <begin position="289"/>
        <end position="662"/>
    </location>
</feature>
<feature type="domain" description="Ig-like C2-type">
    <location>
        <begin position="37"/>
        <end position="128"/>
    </location>
</feature>
<feature type="domain" description="EGF-like" evidence="5">
    <location>
        <begin position="178"/>
        <end position="222"/>
    </location>
</feature>
<feature type="region of interest" description="Disordered" evidence="6">
    <location>
        <begin position="1"/>
        <end position="52"/>
    </location>
</feature>
<feature type="region of interest" description="Disordered" evidence="6">
    <location>
        <begin position="358"/>
        <end position="383"/>
    </location>
</feature>
<feature type="region of interest" description="Disordered" evidence="6">
    <location>
        <begin position="398"/>
        <end position="480"/>
    </location>
</feature>
<feature type="region of interest" description="Disordered" evidence="6">
    <location>
        <begin position="547"/>
        <end position="610"/>
    </location>
</feature>
<feature type="compositionally biased region" description="Low complexity" evidence="6">
    <location>
        <begin position="358"/>
        <end position="373"/>
    </location>
</feature>
<feature type="compositionally biased region" description="Polar residues" evidence="6">
    <location>
        <begin position="374"/>
        <end position="383"/>
    </location>
</feature>
<feature type="compositionally biased region" description="Gly residues" evidence="6">
    <location>
        <begin position="410"/>
        <end position="420"/>
    </location>
</feature>
<feature type="compositionally biased region" description="Basic and acidic residues" evidence="6">
    <location>
        <begin position="425"/>
        <end position="445"/>
    </location>
</feature>
<feature type="compositionally biased region" description="Basic residues" evidence="6">
    <location>
        <begin position="564"/>
        <end position="574"/>
    </location>
</feature>
<feature type="compositionally biased region" description="Low complexity" evidence="6">
    <location>
        <begin position="585"/>
        <end position="596"/>
    </location>
</feature>
<feature type="glycosylation site" description="N-linked (GlcNAc...) asparagine" evidence="4">
    <location>
        <position position="120"/>
    </location>
</feature>
<feature type="glycosylation site" description="N-linked (GlcNAc...) asparagine" evidence="4">
    <location>
        <position position="126"/>
    </location>
</feature>
<feature type="glycosylation site" description="N-linked (GlcNAc...) asparagine" evidence="4">
    <location>
        <position position="164"/>
    </location>
</feature>
<feature type="disulfide bond">
    <location>
        <begin position="57"/>
        <end position="112"/>
    </location>
</feature>
<feature type="disulfide bond" evidence="1">
    <location>
        <begin position="182"/>
        <end position="196"/>
    </location>
</feature>
<feature type="disulfide bond" evidence="1">
    <location>
        <begin position="190"/>
        <end position="210"/>
    </location>
</feature>
<feature type="disulfide bond" evidence="1">
    <location>
        <begin position="212"/>
        <end position="221"/>
    </location>
</feature>
<feature type="splice variant" id="VSP_003436" description="In isoform Alpha2A, isoform Alpha2B and isoform Alpha2C." evidence="10">
    <original>PNEFTGDRCQNYVMASFYMTSRRKRQETEKPLERKLDHSLVKES</original>
    <variation>QPGFTGARCTENVPMKVQTQE</variation>
    <location>
        <begin position="213"/>
        <end position="256"/>
    </location>
</feature>
<feature type="splice variant" id="VSP_003437" description="In isoform Beta1." evidence="11">
    <original>MTSRRKRQETEKPLERKLDHSLVKESK</original>
    <variation>KHLGIEFME</variation>
    <location>
        <begin position="231"/>
        <end position="257"/>
    </location>
</feature>
<feature type="splice variant" id="VSP_003440" description="In isoform Beta2 and isoform BetA2A." evidence="11">
    <location>
        <begin position="231"/>
        <end position="256"/>
    </location>
</feature>
<feature type="splice variant" id="VSP_003438" description="In isoform Beta3." evidence="11">
    <original>MTSRRKRQETE</original>
    <variation>STSTPFLSLPE</variation>
    <location>
        <begin position="231"/>
        <end position="241"/>
    </location>
</feature>
<feature type="splice variant" id="VSP_003439" description="In isoform Beta3." evidence="11">
    <location>
        <begin position="242"/>
        <end position="662"/>
    </location>
</feature>
<feature type="splice variant" id="VSP_003441" description="In isoform Beta2." evidence="11">
    <original>PPENVQ</original>
    <variation>RVRTRG</variation>
    <location>
        <begin position="325"/>
        <end position="330"/>
    </location>
</feature>
<feature type="splice variant" id="VSP_003442" description="In isoform Alpha2C." evidence="10">
    <location>
        <begin position="446"/>
        <end position="662"/>
    </location>
</feature>
<feature type="splice variant" id="VSP_003443" description="In isoform Alpha2B." evidence="11">
    <original>YVSAMTTPARMSPVDFHTPSSPKSPPSEMSPPVSSMTVS</original>
    <variation>HNLIAELRRNKAYRSKCMQIQLSATHLRPSSITHLGFIL</variation>
    <location>
        <begin position="446"/>
        <end position="484"/>
    </location>
</feature>
<feature type="splice variant" id="VSP_003444" description="In isoform Alpha2B." evidence="11">
    <location>
        <begin position="485"/>
        <end position="662"/>
    </location>
</feature>
<feature type="sequence conflict" description="In Ref. 2; AA sequence." evidence="11" ref="2">
    <original>K</original>
    <variation>N</variation>
    <location>
        <position position="90"/>
    </location>
</feature>
<feature type="sequence conflict" description="In Ref. 2; AA sequence." evidence="11" ref="2">
    <original>T</original>
    <variation>I</variation>
    <location>
        <position position="137"/>
    </location>
</feature>
<feature type="sequence conflict" description="In Ref. 2; AA sequence." evidence="11" ref="2">
    <original>Y</original>
    <variation>S</variation>
    <location>
        <position position="208"/>
    </location>
</feature>
<evidence type="ECO:0000250" key="1"/>
<evidence type="ECO:0000250" key="2">
    <source>
        <dbReference type="UniProtKB" id="Q02297"/>
    </source>
</evidence>
<evidence type="ECO:0000250" key="3">
    <source>
        <dbReference type="UniProtKB" id="Q6DR98"/>
    </source>
</evidence>
<evidence type="ECO:0000255" key="4"/>
<evidence type="ECO:0000255" key="5">
    <source>
        <dbReference type="PROSITE-ProRule" id="PRU00076"/>
    </source>
</evidence>
<evidence type="ECO:0000256" key="6">
    <source>
        <dbReference type="SAM" id="MobiDB-lite"/>
    </source>
</evidence>
<evidence type="ECO:0000269" key="7">
    <source>
    </source>
</evidence>
<evidence type="ECO:0000269" key="8">
    <source>
    </source>
</evidence>
<evidence type="ECO:0000269" key="9">
    <source>
    </source>
</evidence>
<evidence type="ECO:0000303" key="10">
    <source>
    </source>
</evidence>
<evidence type="ECO:0000305" key="11"/>
<reference key="1">
    <citation type="journal article" date="1994" name="Mol. Cell. Biol.">
        <title>Structural and functional aspects of the multiplicity of Neu differentiation factors.</title>
        <authorList>
            <person name="Wen D."/>
            <person name="Suggs S.V."/>
            <person name="Karunagaran D."/>
            <person name="Liu N."/>
            <person name="Cupples R.L."/>
            <person name="Luo Y."/>
            <person name="Janssen A.M."/>
            <person name="Ben-Baruch N."/>
            <person name="Trollinger D.B."/>
            <person name="Jacobsen V.L."/>
            <person name="Meng S.-Y."/>
            <person name="Lu H.S."/>
            <person name="Hu S."/>
            <person name="Chang D."/>
            <person name="Yang W."/>
            <person name="Yanigahara D."/>
            <person name="Koski R.A."/>
            <person name="Yarden Y."/>
        </authorList>
    </citation>
    <scope>NUCLEOTIDE SEQUENCE [MRNA]</scope>
    <scope>ALTERNATIVE SPLICING</scope>
    <source>
        <tissue>Fibroblast</tissue>
    </source>
</reference>
<reference key="2">
    <citation type="journal article" date="1992" name="Cell">
        <title>Neu differentiation factor: a transmembrane glycoprotein containing an EGF domain and an immunoglobulin homology unit.</title>
        <authorList>
            <person name="Wen D."/>
            <person name="Peles E."/>
            <person name="Cupples R."/>
            <person name="Suggs S.V."/>
            <person name="Bacus S.S."/>
            <person name="Luo Y."/>
            <person name="Trail G."/>
            <person name="Hu S."/>
            <person name="Silbiger S.M."/>
            <person name="Levy R.B."/>
            <person name="Koski R.A."/>
            <person name="Lu H.S."/>
            <person name="Yarden Y."/>
        </authorList>
    </citation>
    <scope>NUCLEOTIDE SEQUENCE [MRNA] (ISOFORM ALPHA2C)</scope>
    <scope>PARTIAL PROTEIN SEQUENCE</scope>
    <source>
        <tissue>Fibroblast</tissue>
    </source>
</reference>
<reference key="3">
    <citation type="journal article" date="1992" name="Cell">
        <title>Isolation of the neu/HER-2 stimulatory ligand: a 44 kd glycoprotein that induces differentiation of mammary tumor cells.</title>
        <authorList>
            <person name="Peles E."/>
            <person name="Bacus S.S."/>
            <person name="Koski R.A."/>
            <person name="Lu H.S."/>
            <person name="Wen D."/>
            <person name="Ogden S.G."/>
            <person name="Levy R.B."/>
            <person name="Yarden Y."/>
        </authorList>
    </citation>
    <scope>PROTEIN SEQUENCE OF 14-36</scope>
</reference>
<reference key="4">
    <citation type="journal article" date="1998" name="J. Biol. Chem.">
        <title>Release of the neuregulin functional polypeptide requires its cytoplasmic tail.</title>
        <authorList>
            <person name="Liu X."/>
            <person name="Hwang H."/>
            <person name="Cao L."/>
            <person name="Wen D."/>
            <person name="Liu N."/>
            <person name="Graham R.M."/>
            <person name="Zhou M."/>
        </authorList>
    </citation>
    <scope>REGULATION OF PROCESSING (ISOFORM ALPHA2C)</scope>
</reference>
<reference key="5">
    <citation type="journal article" date="1998" name="J. Biol. Chem.">
        <title>Transmembrane neuregulins interact with LIM kinase 1, a cytoplasmic protein kinase implicated in development of visuospatial cognition.</title>
        <authorList>
            <person name="Wang J.Y."/>
            <person name="Frenzel K.E."/>
            <person name="Wen D."/>
            <person name="Falls D.L."/>
        </authorList>
    </citation>
    <scope>INTERACTION WITH LIMK1</scope>
</reference>
<reference key="6">
    <citation type="journal article" date="2006" name="Proc. Natl. Acad. Sci. U.S.A.">
        <title>Quantitative phosphoproteomics of vasopressin-sensitive renal cells: regulation of aquaporin-2 phosphorylation at two sites.</title>
        <authorList>
            <person name="Hoffert J.D."/>
            <person name="Pisitkun T."/>
            <person name="Wang G."/>
            <person name="Shen R.-F."/>
            <person name="Knepper M.A."/>
        </authorList>
    </citation>
    <scope>IDENTIFICATION BY MASS SPECTROMETRY [LARGE SCALE ANALYSIS]</scope>
</reference>
<reference key="7">
    <citation type="journal article" date="2007" name="Biochem. Biophys. Res. Commun.">
        <title>Stimulated ErbB4 internalization is necessary for neuregulin signaling in neurons.</title>
        <authorList>
            <person name="Liu Y."/>
            <person name="Tao Y.M."/>
            <person name="Woo R.S."/>
            <person name="Xiong W.C."/>
            <person name="Mei L."/>
        </authorList>
    </citation>
    <scope>FUNCTION</scope>
</reference>
<dbReference type="EMBL" id="U02315">
    <property type="protein sequence ID" value="AAA19940.1"/>
    <property type="molecule type" value="mRNA"/>
</dbReference>
<dbReference type="EMBL" id="U02316">
    <property type="protein sequence ID" value="AAA19941.1"/>
    <property type="molecule type" value="mRNA"/>
</dbReference>
<dbReference type="EMBL" id="U02317">
    <property type="protein sequence ID" value="AAA19942.1"/>
    <property type="molecule type" value="mRNA"/>
</dbReference>
<dbReference type="EMBL" id="U02318">
    <property type="protein sequence ID" value="AAA19943.1"/>
    <property type="molecule type" value="mRNA"/>
</dbReference>
<dbReference type="EMBL" id="U02319">
    <property type="protein sequence ID" value="AAA19944.1"/>
    <property type="molecule type" value="mRNA"/>
</dbReference>
<dbReference type="EMBL" id="U02320">
    <property type="protein sequence ID" value="AAA19945.1"/>
    <property type="molecule type" value="mRNA"/>
</dbReference>
<dbReference type="EMBL" id="U02321">
    <property type="protein sequence ID" value="AAA19946.1"/>
    <property type="molecule type" value="mRNA"/>
</dbReference>
<dbReference type="EMBL" id="U02322">
    <property type="protein sequence ID" value="AAA19947.1"/>
    <property type="molecule type" value="mRNA"/>
</dbReference>
<dbReference type="EMBL" id="U02323">
    <property type="protein sequence ID" value="AAA19948.1"/>
    <property type="molecule type" value="mRNA"/>
</dbReference>
<dbReference type="EMBL" id="U02324">
    <property type="protein sequence ID" value="AAA19949.1"/>
    <property type="molecule type" value="mRNA"/>
</dbReference>
<dbReference type="EMBL" id="M92430">
    <property type="status" value="NOT_ANNOTATED_CDS"/>
    <property type="molecule type" value="mRNA"/>
</dbReference>
<dbReference type="PIR" id="I61718">
    <property type="entry name" value="I61718"/>
</dbReference>
<dbReference type="PIR" id="I61719">
    <property type="entry name" value="I61719"/>
</dbReference>
<dbReference type="PIR" id="I61722">
    <property type="entry name" value="I61722"/>
</dbReference>
<dbReference type="RefSeq" id="NP_001258052.1">
    <molecule id="P43322-8"/>
    <property type="nucleotide sequence ID" value="NM_001271123.1"/>
</dbReference>
<dbReference type="SMR" id="P43322"/>
<dbReference type="FunCoup" id="P43322">
    <property type="interactions" value="789"/>
</dbReference>
<dbReference type="STRING" id="10116.ENSRNOP00000072731"/>
<dbReference type="GlyCosmos" id="P43322">
    <property type="glycosylation" value="3 sites, No reported glycans"/>
</dbReference>
<dbReference type="GlyGen" id="P43322">
    <property type="glycosylation" value="3 sites"/>
</dbReference>
<dbReference type="iPTMnet" id="P43322"/>
<dbReference type="PhosphoSitePlus" id="P43322"/>
<dbReference type="PaxDb" id="10116-ENSRNOP00000014268"/>
<dbReference type="UCSC" id="RGD:621341">
    <molecule id="P43322-1"/>
    <property type="organism name" value="rat"/>
</dbReference>
<dbReference type="AGR" id="RGD:621341"/>
<dbReference type="RGD" id="621341">
    <property type="gene designation" value="Nrg1"/>
</dbReference>
<dbReference type="eggNOG" id="ENOG502QRUM">
    <property type="taxonomic scope" value="Eukaryota"/>
</dbReference>
<dbReference type="InParanoid" id="P43322"/>
<dbReference type="PhylomeDB" id="P43322"/>
<dbReference type="Reactome" id="R-RNO-1227986">
    <property type="pathway name" value="Signaling by ERBB2"/>
</dbReference>
<dbReference type="Reactome" id="R-RNO-1236394">
    <property type="pathway name" value="Signaling by ERBB4"/>
</dbReference>
<dbReference type="Reactome" id="R-RNO-1250196">
    <property type="pathway name" value="SHC1 events in ERBB2 signaling"/>
</dbReference>
<dbReference type="Reactome" id="R-RNO-1250342">
    <property type="pathway name" value="PI3K events in ERBB4 signaling"/>
</dbReference>
<dbReference type="Reactome" id="R-RNO-1250347">
    <property type="pathway name" value="SHC1 events in ERBB4 signaling"/>
</dbReference>
<dbReference type="Reactome" id="R-RNO-1257604">
    <property type="pathway name" value="PIP3 activates AKT signaling"/>
</dbReference>
<dbReference type="Reactome" id="R-RNO-1306955">
    <property type="pathway name" value="GRB7 events in ERBB2 signaling"/>
</dbReference>
<dbReference type="Reactome" id="R-RNO-1358803">
    <property type="pathway name" value="Downregulation of ERBB2:ERBB3 signaling"/>
</dbReference>
<dbReference type="Reactome" id="R-RNO-1963640">
    <property type="pathway name" value="GRB2 events in ERBB2 signaling"/>
</dbReference>
<dbReference type="Reactome" id="R-RNO-1963642">
    <property type="pathway name" value="PI3K events in ERBB2 signaling"/>
</dbReference>
<dbReference type="Reactome" id="R-RNO-5673001">
    <property type="pathway name" value="RAF/MAP kinase cascade"/>
</dbReference>
<dbReference type="Reactome" id="R-RNO-6785631">
    <property type="pathway name" value="ERBB2 Regulates Cell Motility"/>
</dbReference>
<dbReference type="Reactome" id="R-RNO-6811558">
    <property type="pathway name" value="PI5P, PP2A and IER3 Regulate PI3K/AKT Signaling"/>
</dbReference>
<dbReference type="Reactome" id="R-RNO-8847993">
    <property type="pathway name" value="ERBB2 Activates PTK6 Signaling"/>
</dbReference>
<dbReference type="Reactome" id="R-RNO-8863795">
    <property type="pathway name" value="Downregulation of ERBB2 signaling"/>
</dbReference>
<dbReference type="PRO" id="PR:P43322"/>
<dbReference type="Proteomes" id="UP000002494">
    <property type="component" value="Unplaced"/>
</dbReference>
<dbReference type="GO" id="GO:0030424">
    <property type="term" value="C:axon"/>
    <property type="evidence" value="ECO:0000266"/>
    <property type="project" value="RGD"/>
</dbReference>
<dbReference type="GO" id="GO:0005737">
    <property type="term" value="C:cytoplasm"/>
    <property type="evidence" value="ECO:0000266"/>
    <property type="project" value="RGD"/>
</dbReference>
<dbReference type="GO" id="GO:0030425">
    <property type="term" value="C:dendrite"/>
    <property type="evidence" value="ECO:0000314"/>
    <property type="project" value="RGD"/>
</dbReference>
<dbReference type="GO" id="GO:0005615">
    <property type="term" value="C:extracellular space"/>
    <property type="evidence" value="ECO:0000314"/>
    <property type="project" value="RGD"/>
</dbReference>
<dbReference type="GO" id="GO:0098982">
    <property type="term" value="C:GABA-ergic synapse"/>
    <property type="evidence" value="ECO:0000266"/>
    <property type="project" value="RGD"/>
</dbReference>
<dbReference type="GO" id="GO:0098978">
    <property type="term" value="C:glutamatergic synapse"/>
    <property type="evidence" value="ECO:0000266"/>
    <property type="project" value="RGD"/>
</dbReference>
<dbReference type="GO" id="GO:0016020">
    <property type="term" value="C:membrane"/>
    <property type="evidence" value="ECO:0000314"/>
    <property type="project" value="RGD"/>
</dbReference>
<dbReference type="GO" id="GO:0097471">
    <property type="term" value="C:mossy fiber rosette"/>
    <property type="evidence" value="ECO:0000266"/>
    <property type="project" value="RGD"/>
</dbReference>
<dbReference type="GO" id="GO:0031594">
    <property type="term" value="C:neuromuscular junction"/>
    <property type="evidence" value="ECO:0000266"/>
    <property type="project" value="RGD"/>
</dbReference>
<dbReference type="GO" id="GO:0043005">
    <property type="term" value="C:neuron projection"/>
    <property type="evidence" value="ECO:0000314"/>
    <property type="project" value="RGD"/>
</dbReference>
<dbReference type="GO" id="GO:0043025">
    <property type="term" value="C:neuronal cell body"/>
    <property type="evidence" value="ECO:0000314"/>
    <property type="project" value="RGD"/>
</dbReference>
<dbReference type="GO" id="GO:0005886">
    <property type="term" value="C:plasma membrane"/>
    <property type="evidence" value="ECO:0000266"/>
    <property type="project" value="RGD"/>
</dbReference>
<dbReference type="GO" id="GO:0098794">
    <property type="term" value="C:postsynapse"/>
    <property type="evidence" value="ECO:0000266"/>
    <property type="project" value="RGD"/>
</dbReference>
<dbReference type="GO" id="GO:0098839">
    <property type="term" value="C:postsynaptic density membrane"/>
    <property type="evidence" value="ECO:0000266"/>
    <property type="project" value="RGD"/>
</dbReference>
<dbReference type="GO" id="GO:0048787">
    <property type="term" value="C:presynaptic active zone membrane"/>
    <property type="evidence" value="ECO:0000266"/>
    <property type="project" value="RGD"/>
</dbReference>
<dbReference type="GO" id="GO:0045202">
    <property type="term" value="C:synapse"/>
    <property type="evidence" value="ECO:0000266"/>
    <property type="project" value="RGD"/>
</dbReference>
<dbReference type="GO" id="GO:0045499">
    <property type="term" value="F:chemorepellent activity"/>
    <property type="evidence" value="ECO:0000266"/>
    <property type="project" value="RGD"/>
</dbReference>
<dbReference type="GO" id="GO:0005176">
    <property type="term" value="F:ErbB-2 class receptor binding"/>
    <property type="evidence" value="ECO:0000266"/>
    <property type="project" value="RGD"/>
</dbReference>
<dbReference type="GO" id="GO:0043125">
    <property type="term" value="F:ErbB-3 class receptor binding"/>
    <property type="evidence" value="ECO:0000250"/>
    <property type="project" value="UniProtKB"/>
</dbReference>
<dbReference type="GO" id="GO:0008083">
    <property type="term" value="F:growth factor activity"/>
    <property type="evidence" value="ECO:0007669"/>
    <property type="project" value="UniProtKB-KW"/>
</dbReference>
<dbReference type="GO" id="GO:0005178">
    <property type="term" value="F:integrin binding"/>
    <property type="evidence" value="ECO:0000250"/>
    <property type="project" value="UniProtKB"/>
</dbReference>
<dbReference type="GO" id="GO:0030296">
    <property type="term" value="F:protein tyrosine kinase activator activity"/>
    <property type="evidence" value="ECO:0000266"/>
    <property type="project" value="RGD"/>
</dbReference>
<dbReference type="GO" id="GO:0048018">
    <property type="term" value="F:receptor ligand activity"/>
    <property type="evidence" value="ECO:0000266"/>
    <property type="project" value="RGD"/>
</dbReference>
<dbReference type="GO" id="GO:0030971">
    <property type="term" value="F:receptor tyrosine kinase binding"/>
    <property type="evidence" value="ECO:0000314"/>
    <property type="project" value="MGI"/>
</dbReference>
<dbReference type="GO" id="GO:0003712">
    <property type="term" value="F:transcription coregulator activity"/>
    <property type="evidence" value="ECO:0000266"/>
    <property type="project" value="RGD"/>
</dbReference>
<dbReference type="GO" id="GO:0032148">
    <property type="term" value="P:activation of protein kinase B activity"/>
    <property type="evidence" value="ECO:0000250"/>
    <property type="project" value="UniProtKB"/>
</dbReference>
<dbReference type="GO" id="GO:0007420">
    <property type="term" value="P:brain development"/>
    <property type="evidence" value="ECO:0000318"/>
    <property type="project" value="GO_Central"/>
</dbReference>
<dbReference type="GO" id="GO:0003161">
    <property type="term" value="P:cardiac conduction system development"/>
    <property type="evidence" value="ECO:0000266"/>
    <property type="project" value="RGD"/>
</dbReference>
<dbReference type="GO" id="GO:0010659">
    <property type="term" value="P:cardiac muscle cell apoptotic process"/>
    <property type="evidence" value="ECO:0000270"/>
    <property type="project" value="RGD"/>
</dbReference>
<dbReference type="GO" id="GO:0055007">
    <property type="term" value="P:cardiac muscle cell differentiation"/>
    <property type="evidence" value="ECO:0000266"/>
    <property type="project" value="RGD"/>
</dbReference>
<dbReference type="GO" id="GO:0060379">
    <property type="term" value="P:cardiac muscle cell myoblast differentiation"/>
    <property type="evidence" value="ECO:0000266"/>
    <property type="project" value="RGD"/>
</dbReference>
<dbReference type="GO" id="GO:0048738">
    <property type="term" value="P:cardiac muscle tissue development"/>
    <property type="evidence" value="ECO:0000266"/>
    <property type="project" value="RGD"/>
</dbReference>
<dbReference type="GO" id="GO:0030154">
    <property type="term" value="P:cell differentiation"/>
    <property type="evidence" value="ECO:0000318"/>
    <property type="project" value="GO_Central"/>
</dbReference>
<dbReference type="GO" id="GO:0000902">
    <property type="term" value="P:cell morphogenesis"/>
    <property type="evidence" value="ECO:0000266"/>
    <property type="project" value="RGD"/>
</dbReference>
<dbReference type="GO" id="GO:1905145">
    <property type="term" value="P:cellular response to acetylcholine"/>
    <property type="evidence" value="ECO:0000270"/>
    <property type="project" value="RGD"/>
</dbReference>
<dbReference type="GO" id="GO:1990416">
    <property type="term" value="P:cellular response to brain-derived neurotrophic factor stimulus"/>
    <property type="evidence" value="ECO:0000270"/>
    <property type="project" value="RGD"/>
</dbReference>
<dbReference type="GO" id="GO:1904392">
    <property type="term" value="P:cellular response to ciliary neurotrophic factor"/>
    <property type="evidence" value="ECO:0000270"/>
    <property type="project" value="RGD"/>
</dbReference>
<dbReference type="GO" id="GO:1905232">
    <property type="term" value="P:cellular response to L-glutamate"/>
    <property type="evidence" value="ECO:0000270"/>
    <property type="project" value="RGD"/>
</dbReference>
<dbReference type="GO" id="GO:0071260">
    <property type="term" value="P:cellular response to mechanical stimulus"/>
    <property type="evidence" value="ECO:0000270"/>
    <property type="project" value="RGD"/>
</dbReference>
<dbReference type="GO" id="GO:1990090">
    <property type="term" value="P:cellular response to nerve growth factor stimulus"/>
    <property type="evidence" value="ECO:0000270"/>
    <property type="project" value="RGD"/>
</dbReference>
<dbReference type="GO" id="GO:0035865">
    <property type="term" value="P:cellular response to potassium ion"/>
    <property type="evidence" value="ECO:0000270"/>
    <property type="project" value="RGD"/>
</dbReference>
<dbReference type="GO" id="GO:1904015">
    <property type="term" value="P:cellular response to serotonin"/>
    <property type="evidence" value="ECO:0000270"/>
    <property type="project" value="RGD"/>
</dbReference>
<dbReference type="GO" id="GO:0021842">
    <property type="term" value="P:chemorepulsion involved in interneuron migration from the subpallium to the cortex"/>
    <property type="evidence" value="ECO:0000266"/>
    <property type="project" value="RGD"/>
</dbReference>
<dbReference type="GO" id="GO:0050965">
    <property type="term" value="P:detection of temperature stimulus involved in sensory perception of pain"/>
    <property type="evidence" value="ECO:0000266"/>
    <property type="project" value="RGD"/>
</dbReference>
<dbReference type="GO" id="GO:0060956">
    <property type="term" value="P:endocardial cell differentiation"/>
    <property type="evidence" value="ECO:0000266"/>
    <property type="project" value="RGD"/>
</dbReference>
<dbReference type="GO" id="GO:0038127">
    <property type="term" value="P:ERBB signaling pathway"/>
    <property type="evidence" value="ECO:0000250"/>
    <property type="project" value="UniProtKB"/>
</dbReference>
<dbReference type="GO" id="GO:0038133">
    <property type="term" value="P:ERBB2-ERBB3 signaling pathway"/>
    <property type="evidence" value="ECO:0000266"/>
    <property type="project" value="RGD"/>
</dbReference>
<dbReference type="GO" id="GO:0038135">
    <property type="term" value="P:ERBB2-ERBB4 signaling pathway"/>
    <property type="evidence" value="ECO:0000266"/>
    <property type="project" value="RGD"/>
</dbReference>
<dbReference type="GO" id="GO:0038129">
    <property type="term" value="P:ERBB3 signaling pathway"/>
    <property type="evidence" value="ECO:0000266"/>
    <property type="project" value="RGD"/>
</dbReference>
<dbReference type="GO" id="GO:0038130">
    <property type="term" value="P:ERBB4 signaling pathway"/>
    <property type="evidence" value="ECO:0000266"/>
    <property type="project" value="RGD"/>
</dbReference>
<dbReference type="GO" id="GO:0038138">
    <property type="term" value="P:ERBB4-ERBB4 signaling pathway"/>
    <property type="evidence" value="ECO:0000266"/>
    <property type="project" value="RGD"/>
</dbReference>
<dbReference type="GO" id="GO:0007565">
    <property type="term" value="P:female pregnancy"/>
    <property type="evidence" value="ECO:0000270"/>
    <property type="project" value="RGD"/>
</dbReference>
<dbReference type="GO" id="GO:0010001">
    <property type="term" value="P:glial cell differentiation"/>
    <property type="evidence" value="ECO:0000266"/>
    <property type="project" value="RGD"/>
</dbReference>
<dbReference type="GO" id="GO:0021781">
    <property type="term" value="P:glial cell fate commitment"/>
    <property type="evidence" value="ECO:0000266"/>
    <property type="project" value="RGD"/>
</dbReference>
<dbReference type="GO" id="GO:0007507">
    <property type="term" value="P:heart development"/>
    <property type="evidence" value="ECO:0000266"/>
    <property type="project" value="RGD"/>
</dbReference>
<dbReference type="GO" id="GO:0035556">
    <property type="term" value="P:intracellular signal transduction"/>
    <property type="evidence" value="ECO:0000318"/>
    <property type="project" value="GO_Central"/>
</dbReference>
<dbReference type="GO" id="GO:0007626">
    <property type="term" value="P:locomotory behavior"/>
    <property type="evidence" value="ECO:0000314"/>
    <property type="project" value="RGD"/>
</dbReference>
<dbReference type="GO" id="GO:0000165">
    <property type="term" value="P:MAPK cascade"/>
    <property type="evidence" value="ECO:0000266"/>
    <property type="project" value="RGD"/>
</dbReference>
<dbReference type="GO" id="GO:0007613">
    <property type="term" value="P:memory"/>
    <property type="evidence" value="ECO:0000315"/>
    <property type="project" value="RGD"/>
</dbReference>
<dbReference type="GO" id="GO:0033555">
    <property type="term" value="P:multicellular organismal response to stress"/>
    <property type="evidence" value="ECO:0000270"/>
    <property type="project" value="RGD"/>
</dbReference>
<dbReference type="GO" id="GO:0007517">
    <property type="term" value="P:muscle organ development"/>
    <property type="evidence" value="ECO:0000266"/>
    <property type="project" value="RGD"/>
</dbReference>
<dbReference type="GO" id="GO:0042552">
    <property type="term" value="P:myelination"/>
    <property type="evidence" value="ECO:0000266"/>
    <property type="project" value="RGD"/>
</dbReference>
<dbReference type="GO" id="GO:0022011">
    <property type="term" value="P:myelination in peripheral nervous system"/>
    <property type="evidence" value="ECO:0000266"/>
    <property type="project" value="RGD"/>
</dbReference>
<dbReference type="GO" id="GO:2000853">
    <property type="term" value="P:negative regulation of corticosterone secretion"/>
    <property type="evidence" value="ECO:0000315"/>
    <property type="project" value="RGD"/>
</dbReference>
<dbReference type="GO" id="GO:0045892">
    <property type="term" value="P:negative regulation of DNA-templated transcription"/>
    <property type="evidence" value="ECO:0000266"/>
    <property type="project" value="RGD"/>
</dbReference>
<dbReference type="GO" id="GO:2001223">
    <property type="term" value="P:negative regulation of neuron migration"/>
    <property type="evidence" value="ECO:0000266"/>
    <property type="project" value="RGD"/>
</dbReference>
<dbReference type="GO" id="GO:0042177">
    <property type="term" value="P:negative regulation of protein catabolic process"/>
    <property type="evidence" value="ECO:0000266"/>
    <property type="project" value="RGD"/>
</dbReference>
<dbReference type="GO" id="GO:0051048">
    <property type="term" value="P:negative regulation of secretion"/>
    <property type="evidence" value="ECO:0000266"/>
    <property type="project" value="RGD"/>
</dbReference>
<dbReference type="GO" id="GO:0007399">
    <property type="term" value="P:nervous system development"/>
    <property type="evidence" value="ECO:0000266"/>
    <property type="project" value="RGD"/>
</dbReference>
<dbReference type="GO" id="GO:0048663">
    <property type="term" value="P:neuron fate commitment"/>
    <property type="evidence" value="ECO:0000266"/>
    <property type="project" value="RGD"/>
</dbReference>
<dbReference type="GO" id="GO:0001764">
    <property type="term" value="P:neuron migration"/>
    <property type="evidence" value="ECO:0000266"/>
    <property type="project" value="RGD"/>
</dbReference>
<dbReference type="GO" id="GO:0048709">
    <property type="term" value="P:oligodendrocyte differentiation"/>
    <property type="evidence" value="ECO:0000266"/>
    <property type="project" value="RGD"/>
</dbReference>
<dbReference type="GO" id="GO:0007422">
    <property type="term" value="P:peripheral nervous system development"/>
    <property type="evidence" value="ECO:0000266"/>
    <property type="project" value="RGD"/>
</dbReference>
<dbReference type="GO" id="GO:0043491">
    <property type="term" value="P:phosphatidylinositol 3-kinase/protein kinase B signal transduction"/>
    <property type="evidence" value="ECO:0000266"/>
    <property type="project" value="RGD"/>
</dbReference>
<dbReference type="GO" id="GO:0048680">
    <property type="term" value="P:positive regulation of axon regeneration"/>
    <property type="evidence" value="ECO:0000314"/>
    <property type="project" value="RGD"/>
</dbReference>
<dbReference type="GO" id="GO:0070886">
    <property type="term" value="P:positive regulation of calcineurin-NFAT signaling cascade"/>
    <property type="evidence" value="ECO:0000266"/>
    <property type="project" value="RGD"/>
</dbReference>
<dbReference type="GO" id="GO:0008284">
    <property type="term" value="P:positive regulation of cell population proliferation"/>
    <property type="evidence" value="ECO:0000314"/>
    <property type="project" value="RGD"/>
</dbReference>
<dbReference type="GO" id="GO:0070374">
    <property type="term" value="P:positive regulation of ERK1 and ERK2 cascade"/>
    <property type="evidence" value="ECO:0000250"/>
    <property type="project" value="UniProtKB"/>
</dbReference>
<dbReference type="GO" id="GO:0010628">
    <property type="term" value="P:positive regulation of gene expression"/>
    <property type="evidence" value="ECO:0000266"/>
    <property type="project" value="RGD"/>
</dbReference>
<dbReference type="GO" id="GO:1905710">
    <property type="term" value="P:positive regulation of membrane permeability"/>
    <property type="evidence" value="ECO:0000315"/>
    <property type="project" value="RGD"/>
</dbReference>
<dbReference type="GO" id="GO:2000179">
    <property type="term" value="P:positive regulation of neural precursor cell proliferation"/>
    <property type="evidence" value="ECO:0000315"/>
    <property type="project" value="RGD"/>
</dbReference>
<dbReference type="GO" id="GO:0010976">
    <property type="term" value="P:positive regulation of neuron projection development"/>
    <property type="evidence" value="ECO:0000314"/>
    <property type="project" value="RGD"/>
</dbReference>
<dbReference type="GO" id="GO:0051897">
    <property type="term" value="P:positive regulation of phosphatidylinositol 3-kinase/protein kinase B signal transduction"/>
    <property type="evidence" value="ECO:0000266"/>
    <property type="project" value="RGD"/>
</dbReference>
<dbReference type="GO" id="GO:0031334">
    <property type="term" value="P:positive regulation of protein-containing complex assembly"/>
    <property type="evidence" value="ECO:0000266"/>
    <property type="project" value="RGD"/>
</dbReference>
<dbReference type="GO" id="GO:0046579">
    <property type="term" value="P:positive regulation of Ras protein signal transduction"/>
    <property type="evidence" value="ECO:0000266"/>
    <property type="project" value="RGD"/>
</dbReference>
<dbReference type="GO" id="GO:0010625">
    <property type="term" value="P:positive regulation of Schwann cell proliferation"/>
    <property type="evidence" value="ECO:0000315"/>
    <property type="project" value="RGD"/>
</dbReference>
<dbReference type="GO" id="GO:0051155">
    <property type="term" value="P:positive regulation of striated muscle cell differentiation"/>
    <property type="evidence" value="ECO:0000266"/>
    <property type="project" value="RGD"/>
</dbReference>
<dbReference type="GO" id="GO:0099527">
    <property type="term" value="P:postsynapse to nucleus signaling pathway"/>
    <property type="evidence" value="ECO:0000266"/>
    <property type="project" value="RGD"/>
</dbReference>
<dbReference type="GO" id="GO:0030163">
    <property type="term" value="P:protein catabolic process"/>
    <property type="evidence" value="ECO:0000266"/>
    <property type="project" value="RGD"/>
</dbReference>
<dbReference type="GO" id="GO:0045595">
    <property type="term" value="P:regulation of cell differentiation"/>
    <property type="evidence" value="ECO:0000266"/>
    <property type="project" value="RGD"/>
</dbReference>
<dbReference type="GO" id="GO:0099149">
    <property type="term" value="P:regulation of postsynaptic neurotransmitter receptor internalization"/>
    <property type="evidence" value="ECO:0000266"/>
    <property type="project" value="RGD"/>
</dbReference>
<dbReference type="GO" id="GO:1905606">
    <property type="term" value="P:regulation of presynapse assembly"/>
    <property type="evidence" value="ECO:0000266"/>
    <property type="project" value="RGD"/>
</dbReference>
<dbReference type="GO" id="GO:0071548">
    <property type="term" value="P:response to dexamethasone"/>
    <property type="evidence" value="ECO:0000270"/>
    <property type="project" value="RGD"/>
</dbReference>
<dbReference type="GO" id="GO:0014850">
    <property type="term" value="P:response to muscle activity"/>
    <property type="evidence" value="ECO:0000270"/>
    <property type="project" value="RGD"/>
</dbReference>
<dbReference type="GO" id="GO:0031667">
    <property type="term" value="P:response to nutrient levels"/>
    <property type="evidence" value="ECO:0000270"/>
    <property type="project" value="RGD"/>
</dbReference>
<dbReference type="GO" id="GO:0032570">
    <property type="term" value="P:response to progesterone"/>
    <property type="evidence" value="ECO:0000270"/>
    <property type="project" value="RGD"/>
</dbReference>
<dbReference type="GO" id="GO:0006950">
    <property type="term" value="P:response to stress"/>
    <property type="evidence" value="ECO:0000270"/>
    <property type="project" value="RGD"/>
</dbReference>
<dbReference type="GO" id="GO:0033280">
    <property type="term" value="P:response to vitamin D"/>
    <property type="evidence" value="ECO:0000270"/>
    <property type="project" value="RGD"/>
</dbReference>
<dbReference type="GO" id="GO:0014044">
    <property type="term" value="P:Schwann cell development"/>
    <property type="evidence" value="ECO:0000266"/>
    <property type="project" value="RGD"/>
</dbReference>
<dbReference type="GO" id="GO:0014037">
    <property type="term" value="P:Schwann cell differentiation"/>
    <property type="evidence" value="ECO:0000266"/>
    <property type="project" value="RGD"/>
</dbReference>
<dbReference type="GO" id="GO:0019233">
    <property type="term" value="P:sensory perception of pain"/>
    <property type="evidence" value="ECO:0000266"/>
    <property type="project" value="RGD"/>
</dbReference>
<dbReference type="GO" id="GO:0007416">
    <property type="term" value="P:synapse assembly"/>
    <property type="evidence" value="ECO:0000266"/>
    <property type="project" value="RGD"/>
</dbReference>
<dbReference type="GO" id="GO:0099560">
    <property type="term" value="P:synaptic membrane adhesion"/>
    <property type="evidence" value="ECO:0000266"/>
    <property type="project" value="RGD"/>
</dbReference>
<dbReference type="GO" id="GO:0003222">
    <property type="term" value="P:ventricular trabecula myocardium morphogenesis"/>
    <property type="evidence" value="ECO:0000266"/>
    <property type="project" value="RGD"/>
</dbReference>
<dbReference type="CDD" id="cd00053">
    <property type="entry name" value="EGF"/>
    <property type="match status" value="1"/>
</dbReference>
<dbReference type="CDD" id="cd05895">
    <property type="entry name" value="Ig_Pro_neuregulin-1"/>
    <property type="match status" value="1"/>
</dbReference>
<dbReference type="FunFam" id="2.60.40.10:FF:000263">
    <property type="entry name" value="Pro-neuregulin-1, membrane-bound isoform"/>
    <property type="match status" value="1"/>
</dbReference>
<dbReference type="FunFam" id="2.10.25.10:FF:000073">
    <property type="entry name" value="Pro-neuregulin-1, membrane-bound isoform A"/>
    <property type="match status" value="1"/>
</dbReference>
<dbReference type="Gene3D" id="2.60.40.10">
    <property type="entry name" value="Immunoglobulins"/>
    <property type="match status" value="1"/>
</dbReference>
<dbReference type="Gene3D" id="2.10.25.10">
    <property type="entry name" value="Laminin"/>
    <property type="match status" value="1"/>
</dbReference>
<dbReference type="InterPro" id="IPR000742">
    <property type="entry name" value="EGF-like_dom"/>
</dbReference>
<dbReference type="InterPro" id="IPR007110">
    <property type="entry name" value="Ig-like_dom"/>
</dbReference>
<dbReference type="InterPro" id="IPR036179">
    <property type="entry name" value="Ig-like_dom_sf"/>
</dbReference>
<dbReference type="InterPro" id="IPR013783">
    <property type="entry name" value="Ig-like_fold"/>
</dbReference>
<dbReference type="InterPro" id="IPR013098">
    <property type="entry name" value="Ig_I-set"/>
</dbReference>
<dbReference type="InterPro" id="IPR003599">
    <property type="entry name" value="Ig_sub"/>
</dbReference>
<dbReference type="InterPro" id="IPR003598">
    <property type="entry name" value="Ig_sub2"/>
</dbReference>
<dbReference type="InterPro" id="IPR040180">
    <property type="entry name" value="Neuregulin"/>
</dbReference>
<dbReference type="InterPro" id="IPR002154">
    <property type="entry name" value="Neuregulin_C"/>
</dbReference>
<dbReference type="InterPro" id="IPR018250">
    <property type="entry name" value="NRG1"/>
</dbReference>
<dbReference type="PANTHER" id="PTHR11100">
    <property type="entry name" value="HEREGULIN-NEUREGULIN FAMILY MEMBER"/>
    <property type="match status" value="1"/>
</dbReference>
<dbReference type="PANTHER" id="PTHR11100:SF7">
    <property type="entry name" value="PRO-NEUREGULIN-1, MEMBRANE-BOUND ISOFORM"/>
    <property type="match status" value="1"/>
</dbReference>
<dbReference type="Pfam" id="PF07679">
    <property type="entry name" value="I-set"/>
    <property type="match status" value="1"/>
</dbReference>
<dbReference type="Pfam" id="PF02158">
    <property type="entry name" value="Neuregulin"/>
    <property type="match status" value="1"/>
</dbReference>
<dbReference type="PRINTS" id="PR01089">
    <property type="entry name" value="NEUREGULIN"/>
</dbReference>
<dbReference type="SMART" id="SM00181">
    <property type="entry name" value="EGF"/>
    <property type="match status" value="1"/>
</dbReference>
<dbReference type="SMART" id="SM00409">
    <property type="entry name" value="IG"/>
    <property type="match status" value="1"/>
</dbReference>
<dbReference type="SMART" id="SM00408">
    <property type="entry name" value="IGc2"/>
    <property type="match status" value="1"/>
</dbReference>
<dbReference type="SUPFAM" id="SSF57196">
    <property type="entry name" value="EGF/Laminin"/>
    <property type="match status" value="1"/>
</dbReference>
<dbReference type="SUPFAM" id="SSF48726">
    <property type="entry name" value="Immunoglobulin"/>
    <property type="match status" value="1"/>
</dbReference>
<dbReference type="PROSITE" id="PS00022">
    <property type="entry name" value="EGF_1"/>
    <property type="match status" value="1"/>
</dbReference>
<dbReference type="PROSITE" id="PS50026">
    <property type="entry name" value="EGF_3"/>
    <property type="match status" value="1"/>
</dbReference>
<dbReference type="PROSITE" id="PS50835">
    <property type="entry name" value="IG_LIKE"/>
    <property type="match status" value="1"/>
</dbReference>
<comment type="function">
    <text evidence="2 8">Direct ligand for ERBB3 and ERBB4 tyrosine kinase receptors. Concomitantly recruits ERBB1 and ERBB2 coreceptors, resulting in ligand-stimulated tyrosine phosphorylation and activation of the ERBB receptors. The multiple isoforms perform diverse functions such as inducing growth and differentiation of epithelial, glial, neuronal, and skeletal muscle cells; inducing expression of acetylcholine receptor in synaptic vesicles during the formation of the neuromuscular junction; stimulating lobuloalveolar budding and milk production in the mammary gland and inducing differentiation of mammary tumor cells; stimulating Schwann cell proliferation; implication in the development of the myocardium such as trabeculation of the developing heart. Binds to ERBB4 and ERBB3. Acts as a ligand for integrins and binds (via EGF domain) to integrins ITGAV:ITGB3 or ITGA6:ITGB4. Its binding to integrins and subsequent ternary complex formation with integrins and ERRB3 are essential for NRG1-ERBB signaling (By similarity). Induces the phosphorylation and activation of MAPK3/ERK1, MAPK1/ERK2 and AKT1, and ligand-dependent ERBB4 endocytosis is essential for the NRG1-mediated activation of these kinases in neurons (PubMed:17250808).</text>
</comment>
<comment type="subunit">
    <text evidence="2 3 9">The cytoplasmic domain interacts with the LIM domain region of LIMK1 (PubMed:9685409). Forms a ternary complex with ERBB3 and ITGAV:ITGB3 or ITGA6:ITGB4 (By similarity). Interacts with NRDC and BACE1 (By similarity).</text>
</comment>
<comment type="subcellular location">
    <molecule>Pro-neuregulin-1, membrane-bound isoform</molecule>
    <subcellularLocation>
        <location>Cell membrane</location>
        <topology>Single-pass type I membrane protein</topology>
    </subcellularLocation>
    <text>Does not seem to be active.</text>
</comment>
<comment type="subcellular location">
    <molecule>Neuregulin-1</molecule>
    <subcellularLocation>
        <location>Secreted</location>
    </subcellularLocation>
</comment>
<comment type="alternative products">
    <event type="alternative splicing"/>
    <isoform>
        <id>P43322-1</id>
        <name>Beta4</name>
        <name>NDF42A</name>
        <sequence type="displayed"/>
    </isoform>
    <isoform>
        <id>P43322-2</id>
        <name>Alpha2A</name>
        <name>NDF38</name>
        <sequence type="described" ref="VSP_003436"/>
    </isoform>
    <isoform>
        <id>P43322-3</id>
        <name>Alpha2B</name>
        <name>NDF19</name>
        <sequence type="described" ref="VSP_003436 VSP_003443 VSP_003444"/>
    </isoform>
    <isoform>
        <id>P43322-4</id>
        <name>Alpha2C</name>
        <name>NDF44</name>
        <sequence type="described" ref="VSP_003436 VSP_003442"/>
    </isoform>
    <isoform>
        <id>P43322-5</id>
        <name>Beta1</name>
        <sequence type="described" ref="VSP_003437"/>
    </isoform>
    <isoform>
        <id>P43322-6</id>
        <name>Beta2</name>
        <name>NDF40</name>
        <sequence type="described" ref="VSP_003440 VSP_003441"/>
    </isoform>
    <isoform>
        <id>P43322-7</id>
        <name>BetA2A</name>
        <name>NDF22</name>
        <sequence type="described" ref="VSP_003440"/>
    </isoform>
    <isoform>
        <id>P43322-8</id>
        <name>Beta3</name>
        <name>NDF4</name>
        <sequence type="described" ref="VSP_003438 VSP_003439"/>
    </isoform>
    <text>Additional isoforms seem to exist.</text>
</comment>
<comment type="tissue specificity">
    <text>Widely expressed. Most tissues contain isoform alpha2A and isoform alpha2B. Isoform Alpha2 and isoform beta2 are the predominant forms in mesenchymal and non-neuronal organs. Isoform Beta1 is enriched in brain and spinal cord, but not in muscle and heart. Isoform Alpha2C is highly expressed in spinal cord, moderately in lung, brain, ovary, and stomach, in low amounts in the kidney, skin and heart and not detected in the liver, spleen, and placenta.</text>
</comment>
<comment type="domain">
    <text>The cytoplasmic domain may be involved in the regulation of trafficking and proteolytic processing. Regulation of the proteolytic processing involves initial intracellular domain dimerization.</text>
</comment>
<comment type="domain">
    <text>ERBB receptor binding is elicited entirely by the EGF-like domain.</text>
</comment>
<comment type="PTM">
    <text>Proteolytic cleavage close to the plasma membrane on the external face leads to the release of the soluble growth factor form.</text>
</comment>
<comment type="PTM">
    <text evidence="1">N- and O-glycosylated (By similarity). Extensive glycosylation precedes the proteolytic cleavage.</text>
</comment>
<comment type="similarity">
    <text evidence="11">Belongs to the neuregulin family.</text>
</comment>
<name>NRG1_RAT</name>
<gene>
    <name type="primary">Nrg1</name>
    <name type="synonym">Ndf</name>
</gene>